<protein>
    <recommendedName>
        <fullName evidence="1">D-aminoacyl-tRNA deacylase</fullName>
        <shortName evidence="1">DTD</shortName>
        <ecNumber evidence="1">3.1.1.96</ecNumber>
    </recommendedName>
    <alternativeName>
        <fullName evidence="1">Gly-tRNA(Ala) deacylase</fullName>
    </alternativeName>
</protein>
<feature type="chain" id="PRO_1000050811" description="D-aminoacyl-tRNA deacylase">
    <location>
        <begin position="1"/>
        <end position="147"/>
    </location>
</feature>
<feature type="short sequence motif" description="Gly-cisPro motif, important for rejection of L-amino acids" evidence="1">
    <location>
        <begin position="137"/>
        <end position="138"/>
    </location>
</feature>
<dbReference type="EC" id="3.1.1.96" evidence="1"/>
<dbReference type="EMBL" id="CP000560">
    <property type="protein sequence ID" value="ABS74830.1"/>
    <property type="molecule type" value="Genomic_DNA"/>
</dbReference>
<dbReference type="RefSeq" id="WP_012118085.1">
    <property type="nucleotide sequence ID" value="NC_009725.2"/>
</dbReference>
<dbReference type="SMR" id="A7Z754"/>
<dbReference type="GeneID" id="93081612"/>
<dbReference type="KEGG" id="bay:RBAM_024700"/>
<dbReference type="HOGENOM" id="CLU_076901_1_0_9"/>
<dbReference type="Proteomes" id="UP000001120">
    <property type="component" value="Chromosome"/>
</dbReference>
<dbReference type="GO" id="GO:0005737">
    <property type="term" value="C:cytoplasm"/>
    <property type="evidence" value="ECO:0007669"/>
    <property type="project" value="UniProtKB-SubCell"/>
</dbReference>
<dbReference type="GO" id="GO:0051500">
    <property type="term" value="F:D-tyrosyl-tRNA(Tyr) deacylase activity"/>
    <property type="evidence" value="ECO:0007669"/>
    <property type="project" value="TreeGrafter"/>
</dbReference>
<dbReference type="GO" id="GO:0106026">
    <property type="term" value="F:Gly-tRNA(Ala) deacylase activity"/>
    <property type="evidence" value="ECO:0007669"/>
    <property type="project" value="UniProtKB-UniRule"/>
</dbReference>
<dbReference type="GO" id="GO:0043908">
    <property type="term" value="F:Ser(Gly)-tRNA(Ala) hydrolase activity"/>
    <property type="evidence" value="ECO:0007669"/>
    <property type="project" value="UniProtKB-UniRule"/>
</dbReference>
<dbReference type="GO" id="GO:0000049">
    <property type="term" value="F:tRNA binding"/>
    <property type="evidence" value="ECO:0007669"/>
    <property type="project" value="UniProtKB-UniRule"/>
</dbReference>
<dbReference type="GO" id="GO:0019478">
    <property type="term" value="P:D-amino acid catabolic process"/>
    <property type="evidence" value="ECO:0007669"/>
    <property type="project" value="UniProtKB-UniRule"/>
</dbReference>
<dbReference type="CDD" id="cd00563">
    <property type="entry name" value="Dtyr_deacylase"/>
    <property type="match status" value="1"/>
</dbReference>
<dbReference type="FunFam" id="3.50.80.10:FF:000001">
    <property type="entry name" value="D-aminoacyl-tRNA deacylase"/>
    <property type="match status" value="1"/>
</dbReference>
<dbReference type="Gene3D" id="3.50.80.10">
    <property type="entry name" value="D-tyrosyl-tRNA(Tyr) deacylase"/>
    <property type="match status" value="1"/>
</dbReference>
<dbReference type="HAMAP" id="MF_00518">
    <property type="entry name" value="Deacylase_Dtd"/>
    <property type="match status" value="1"/>
</dbReference>
<dbReference type="InterPro" id="IPR003732">
    <property type="entry name" value="Daa-tRNA_deacyls_DTD"/>
</dbReference>
<dbReference type="InterPro" id="IPR023509">
    <property type="entry name" value="DTD-like_sf"/>
</dbReference>
<dbReference type="NCBIfam" id="TIGR00256">
    <property type="entry name" value="D-aminoacyl-tRNA deacylase"/>
    <property type="match status" value="1"/>
</dbReference>
<dbReference type="PANTHER" id="PTHR10472:SF5">
    <property type="entry name" value="D-AMINOACYL-TRNA DEACYLASE 1"/>
    <property type="match status" value="1"/>
</dbReference>
<dbReference type="PANTHER" id="PTHR10472">
    <property type="entry name" value="D-TYROSYL-TRNA TYR DEACYLASE"/>
    <property type="match status" value="1"/>
</dbReference>
<dbReference type="Pfam" id="PF02580">
    <property type="entry name" value="Tyr_Deacylase"/>
    <property type="match status" value="1"/>
</dbReference>
<dbReference type="SUPFAM" id="SSF69500">
    <property type="entry name" value="DTD-like"/>
    <property type="match status" value="1"/>
</dbReference>
<evidence type="ECO:0000255" key="1">
    <source>
        <dbReference type="HAMAP-Rule" id="MF_00518"/>
    </source>
</evidence>
<gene>
    <name evidence="1" type="primary">dtd</name>
    <name type="ordered locus">RBAM_024700</name>
</gene>
<name>DTD_BACVZ</name>
<accession>A7Z754</accession>
<sequence>MKLVVQRVTEASVTVEGAVAGRIGPGIMALVGITHEDTEEDAAYLADKIVNLRIFDDESGKMNLSLLDTGGEILSVSQFTLYGETKKGRRPNFMNAAKPDQAVLLYEKWNELLREKGVKVETGIFGAMMDVQLTNSGPITLIMDSKQ</sequence>
<comment type="function">
    <text evidence="1">An aminoacyl-tRNA editing enzyme that deacylates mischarged D-aminoacyl-tRNAs. Also deacylates mischarged glycyl-tRNA(Ala), protecting cells against glycine mischarging by AlaRS. Acts via tRNA-based rather than protein-based catalysis; rejects L-amino acids rather than detecting D-amino acids in the active site. By recycling D-aminoacyl-tRNA to D-amino acids and free tRNA molecules, this enzyme counteracts the toxicity associated with the formation of D-aminoacyl-tRNA entities in vivo and helps enforce protein L-homochirality.</text>
</comment>
<comment type="catalytic activity">
    <reaction evidence="1">
        <text>glycyl-tRNA(Ala) + H2O = tRNA(Ala) + glycine + H(+)</text>
        <dbReference type="Rhea" id="RHEA:53744"/>
        <dbReference type="Rhea" id="RHEA-COMP:9657"/>
        <dbReference type="Rhea" id="RHEA-COMP:13640"/>
        <dbReference type="ChEBI" id="CHEBI:15377"/>
        <dbReference type="ChEBI" id="CHEBI:15378"/>
        <dbReference type="ChEBI" id="CHEBI:57305"/>
        <dbReference type="ChEBI" id="CHEBI:78442"/>
        <dbReference type="ChEBI" id="CHEBI:78522"/>
        <dbReference type="EC" id="3.1.1.96"/>
    </reaction>
</comment>
<comment type="catalytic activity">
    <reaction evidence="1">
        <text>a D-aminoacyl-tRNA + H2O = a tRNA + a D-alpha-amino acid + H(+)</text>
        <dbReference type="Rhea" id="RHEA:13953"/>
        <dbReference type="Rhea" id="RHEA-COMP:10123"/>
        <dbReference type="Rhea" id="RHEA-COMP:10124"/>
        <dbReference type="ChEBI" id="CHEBI:15377"/>
        <dbReference type="ChEBI" id="CHEBI:15378"/>
        <dbReference type="ChEBI" id="CHEBI:59871"/>
        <dbReference type="ChEBI" id="CHEBI:78442"/>
        <dbReference type="ChEBI" id="CHEBI:79333"/>
        <dbReference type="EC" id="3.1.1.96"/>
    </reaction>
</comment>
<comment type="subunit">
    <text evidence="1">Homodimer.</text>
</comment>
<comment type="subcellular location">
    <subcellularLocation>
        <location evidence="1">Cytoplasm</location>
    </subcellularLocation>
</comment>
<comment type="domain">
    <text evidence="1">A Gly-cisPro motif from one monomer fits into the active site of the other monomer to allow specific chiral rejection of L-amino acids.</text>
</comment>
<comment type="similarity">
    <text evidence="1">Belongs to the DTD family.</text>
</comment>
<keyword id="KW-0963">Cytoplasm</keyword>
<keyword id="KW-0378">Hydrolase</keyword>
<keyword id="KW-0694">RNA-binding</keyword>
<keyword id="KW-0820">tRNA-binding</keyword>
<reference key="1">
    <citation type="journal article" date="2007" name="Nat. Biotechnol.">
        <title>Comparative analysis of the complete genome sequence of the plant growth-promoting bacterium Bacillus amyloliquefaciens FZB42.</title>
        <authorList>
            <person name="Chen X.H."/>
            <person name="Koumoutsi A."/>
            <person name="Scholz R."/>
            <person name="Eisenreich A."/>
            <person name="Schneider K."/>
            <person name="Heinemeyer I."/>
            <person name="Morgenstern B."/>
            <person name="Voss B."/>
            <person name="Hess W.R."/>
            <person name="Reva O."/>
            <person name="Junge H."/>
            <person name="Voigt B."/>
            <person name="Jungblut P.R."/>
            <person name="Vater J."/>
            <person name="Suessmuth R."/>
            <person name="Liesegang H."/>
            <person name="Strittmatter A."/>
            <person name="Gottschalk G."/>
            <person name="Borriss R."/>
        </authorList>
    </citation>
    <scope>NUCLEOTIDE SEQUENCE [LARGE SCALE GENOMIC DNA]</scope>
    <source>
        <strain>DSM 23117 / BGSC 10A6 / LMG 26770 / FZB42</strain>
    </source>
</reference>
<organism>
    <name type="scientific">Bacillus velezensis (strain DSM 23117 / BGSC 10A6 / LMG 26770 / FZB42)</name>
    <name type="common">Bacillus amyloliquefaciens subsp. plantarum</name>
    <dbReference type="NCBI Taxonomy" id="326423"/>
    <lineage>
        <taxon>Bacteria</taxon>
        <taxon>Bacillati</taxon>
        <taxon>Bacillota</taxon>
        <taxon>Bacilli</taxon>
        <taxon>Bacillales</taxon>
        <taxon>Bacillaceae</taxon>
        <taxon>Bacillus</taxon>
        <taxon>Bacillus amyloliquefaciens group</taxon>
    </lineage>
</organism>
<proteinExistence type="inferred from homology"/>